<reference key="1">
    <citation type="journal article" date="2008" name="Genetics">
        <title>Sequential elimination of major-effect contributors identifies additional quantitative trait loci conditioning high-temperature growth in yeast.</title>
        <authorList>
            <person name="Sinha H."/>
            <person name="David L."/>
            <person name="Pascon R.C."/>
            <person name="Clauder-Muenster S."/>
            <person name="Krishnakumar S."/>
            <person name="Nguyen M."/>
            <person name="Shi G."/>
            <person name="Dean J."/>
            <person name="Davis R.W."/>
            <person name="Oefner P.J."/>
            <person name="McCusker J.H."/>
            <person name="Steinmetz L.M."/>
        </authorList>
    </citation>
    <scope>NUCLEOTIDE SEQUENCE [GENOMIC DNA]</scope>
</reference>
<reference key="2">
    <citation type="journal article" date="2007" name="Proc. Natl. Acad. Sci. U.S.A.">
        <title>Genome sequencing and comparative analysis of Saccharomyces cerevisiae strain YJM789.</title>
        <authorList>
            <person name="Wei W."/>
            <person name="McCusker J.H."/>
            <person name="Hyman R.W."/>
            <person name="Jones T."/>
            <person name="Ning Y."/>
            <person name="Cao Z."/>
            <person name="Gu Z."/>
            <person name="Bruno D."/>
            <person name="Miranda M."/>
            <person name="Nguyen M."/>
            <person name="Wilhelmy J."/>
            <person name="Komp C."/>
            <person name="Tamse R."/>
            <person name="Wang X."/>
            <person name="Jia P."/>
            <person name="Luedi P."/>
            <person name="Oefner P.J."/>
            <person name="David L."/>
            <person name="Dietrich F.S."/>
            <person name="Li Y."/>
            <person name="Davis R.W."/>
            <person name="Steinmetz L.M."/>
        </authorList>
    </citation>
    <scope>NUCLEOTIDE SEQUENCE [LARGE SCALE GENOMIC DNA]</scope>
    <source>
        <strain>YJM789</strain>
    </source>
</reference>
<keyword id="KW-0329">Glyoxylate bypass</keyword>
<keyword id="KW-0576">Peroxisome</keyword>
<keyword id="KW-0808">Transferase</keyword>
<keyword id="KW-0816">Tricarboxylic acid cycle</keyword>
<organism>
    <name type="scientific">Saccharomyces cerevisiae (strain YJM789)</name>
    <name type="common">Baker's yeast</name>
    <dbReference type="NCBI Taxonomy" id="307796"/>
    <lineage>
        <taxon>Eukaryota</taxon>
        <taxon>Fungi</taxon>
        <taxon>Dikarya</taxon>
        <taxon>Ascomycota</taxon>
        <taxon>Saccharomycotina</taxon>
        <taxon>Saccharomycetes</taxon>
        <taxon>Saccharomycetales</taxon>
        <taxon>Saccharomycetaceae</taxon>
        <taxon>Saccharomyces</taxon>
    </lineage>
</organism>
<evidence type="ECO:0000250" key="1">
    <source>
        <dbReference type="UniProtKB" id="P30952"/>
    </source>
</evidence>
<evidence type="ECO:0000250" key="2">
    <source>
        <dbReference type="UniProtKB" id="Q9LZC3"/>
    </source>
</evidence>
<evidence type="ECO:0000305" key="3"/>
<accession>A6ZRW6</accession>
<accession>B0KZS7</accession>
<proteinExistence type="inferred from homology"/>
<sequence>MVKVSLDNVKLLVDVDKEPFFKPSSTTVGDILTKDALEFIVLLHRTFNNKRKQLLENRQVVQKKLDSGSYHLDFLPETANIRNDPTWQGPILAPGLINRSTEITGPPLRNMLINALNAPVNTYMTDFEDSASPTWNNMVYGQVNLYDAIRNQIDFDTPRKSYKLNGNVANLPTIIVRPRGWHMVEKHLYVDDEPISASIFDFGLYFYHNAKELIKLGKGPYFYLPKMEHHLEAKLWNDVFCVAQDYIGIPRGTIRATVLIETLPAAFQMEEIIYQLRQHSSGLNCGRWDYIFSTIKRLRNDPNHILPNRDQVTMTSPFMDAYVKRLINTCHRRGVHAMGGMAAQIPIKDDPAANEKAMTKVRNDKIRELTNGHDGSWVAHPALAPICNEVFINMGTPNQIYFIPENVVTAANLLETKIPNGEITTEGIVQNLDIGLQYMEAWLRGSGCVPINNLMEDAATAEVSRCQLYQWVKHGVTLKDTGEKVTPELTEKILKEQVERLSKASPLGDKNKFALAAKYFLPEIRGEKFSEFLTTLLYDEIVSTKATPTDLSKL</sequence>
<feature type="chain" id="PRO_0000378321" description="Malate synthase 1">
    <location>
        <begin position="1"/>
        <end position="554"/>
    </location>
</feature>
<feature type="short sequence motif" description="SKL peroxisome targeting motif" evidence="1">
    <location>
        <begin position="552"/>
        <end position="554"/>
    </location>
</feature>
<feature type="active site" description="Proton acceptor" evidence="2">
    <location>
        <position position="177"/>
    </location>
</feature>
<feature type="active site" description="Proton donor" evidence="2">
    <location>
        <position position="457"/>
    </location>
</feature>
<dbReference type="EC" id="2.3.3.9" evidence="2"/>
<dbReference type="EMBL" id="EF125227">
    <property type="protein sequence ID" value="ABN58639.1"/>
    <property type="molecule type" value="Genomic_DNA"/>
</dbReference>
<dbReference type="EMBL" id="AAFW02000067">
    <property type="protein sequence ID" value="EDN62698.1"/>
    <property type="molecule type" value="Genomic_DNA"/>
</dbReference>
<dbReference type="SMR" id="A6ZRW6"/>
<dbReference type="HOGENOM" id="CLU_018928_3_0_1"/>
<dbReference type="UniPathway" id="UPA00703">
    <property type="reaction ID" value="UER00720"/>
</dbReference>
<dbReference type="Proteomes" id="UP000007060">
    <property type="component" value="Unassembled WGS sequence"/>
</dbReference>
<dbReference type="GO" id="GO:0005782">
    <property type="term" value="C:peroxisomal matrix"/>
    <property type="evidence" value="ECO:0007669"/>
    <property type="project" value="UniProtKB-SubCell"/>
</dbReference>
<dbReference type="GO" id="GO:0004474">
    <property type="term" value="F:malate synthase activity"/>
    <property type="evidence" value="ECO:0007669"/>
    <property type="project" value="UniProtKB-EC"/>
</dbReference>
<dbReference type="GO" id="GO:0006097">
    <property type="term" value="P:glyoxylate cycle"/>
    <property type="evidence" value="ECO:0007669"/>
    <property type="project" value="UniProtKB-UniPathway"/>
</dbReference>
<dbReference type="GO" id="GO:0006099">
    <property type="term" value="P:tricarboxylic acid cycle"/>
    <property type="evidence" value="ECO:0007669"/>
    <property type="project" value="UniProtKB-KW"/>
</dbReference>
<dbReference type="CDD" id="cd00727">
    <property type="entry name" value="malate_synt_A"/>
    <property type="match status" value="1"/>
</dbReference>
<dbReference type="FunFam" id="1.20.1220.12:FF:000001">
    <property type="entry name" value="Malate synthase"/>
    <property type="match status" value="1"/>
</dbReference>
<dbReference type="FunFam" id="3.20.20.360:FF:000001">
    <property type="entry name" value="Malate synthase"/>
    <property type="match status" value="1"/>
</dbReference>
<dbReference type="Gene3D" id="3.20.20.360">
    <property type="entry name" value="Malate synthase, domain 3"/>
    <property type="match status" value="1"/>
</dbReference>
<dbReference type="Gene3D" id="1.20.1220.12">
    <property type="entry name" value="Malate synthase, domain III"/>
    <property type="match status" value="1"/>
</dbReference>
<dbReference type="InterPro" id="IPR044856">
    <property type="entry name" value="Malate_synth_C_sf"/>
</dbReference>
<dbReference type="InterPro" id="IPR011076">
    <property type="entry name" value="Malate_synth_sf"/>
</dbReference>
<dbReference type="InterPro" id="IPR006252">
    <property type="entry name" value="Malate_synthA"/>
</dbReference>
<dbReference type="InterPro" id="IPR019830">
    <property type="entry name" value="Malate_synthase_CS"/>
</dbReference>
<dbReference type="InterPro" id="IPR001465">
    <property type="entry name" value="Malate_synthase_TIM"/>
</dbReference>
<dbReference type="InterPro" id="IPR048355">
    <property type="entry name" value="MS_C"/>
</dbReference>
<dbReference type="InterPro" id="IPR048356">
    <property type="entry name" value="MS_N"/>
</dbReference>
<dbReference type="InterPro" id="IPR046363">
    <property type="entry name" value="MS_N_TIM-barrel_dom"/>
</dbReference>
<dbReference type="NCBIfam" id="TIGR01344">
    <property type="entry name" value="malate_syn_A"/>
    <property type="match status" value="1"/>
</dbReference>
<dbReference type="PANTHER" id="PTHR42902">
    <property type="entry name" value="MALATE SYNTHASE"/>
    <property type="match status" value="1"/>
</dbReference>
<dbReference type="PANTHER" id="PTHR42902:SF1">
    <property type="entry name" value="MALATE SYNTHASE 1-RELATED"/>
    <property type="match status" value="1"/>
</dbReference>
<dbReference type="Pfam" id="PF20659">
    <property type="entry name" value="MS_C"/>
    <property type="match status" value="1"/>
</dbReference>
<dbReference type="Pfam" id="PF20656">
    <property type="entry name" value="MS_N"/>
    <property type="match status" value="1"/>
</dbReference>
<dbReference type="Pfam" id="PF01274">
    <property type="entry name" value="MS_TIM-barrel"/>
    <property type="match status" value="1"/>
</dbReference>
<dbReference type="PIRSF" id="PIRSF001363">
    <property type="entry name" value="Malate_synth"/>
    <property type="match status" value="1"/>
</dbReference>
<dbReference type="SUPFAM" id="SSF51645">
    <property type="entry name" value="Malate synthase G"/>
    <property type="match status" value="1"/>
</dbReference>
<dbReference type="PROSITE" id="PS00510">
    <property type="entry name" value="MALATE_SYNTHASE"/>
    <property type="match status" value="1"/>
</dbReference>
<protein>
    <recommendedName>
        <fullName evidence="1">Malate synthase 1</fullName>
        <ecNumber evidence="2">2.3.3.9</ecNumber>
    </recommendedName>
</protein>
<name>MLS1_YEAS7</name>
<comment type="function">
    <text evidence="1">Malate synthase which takes part in the glyoxylate cycle (By similarity). MLS1 activity is essential for cells to grow on oleic acid as a sole carbon source (By similarity). Two steps of the glyoxylate cycle take place in the cytosol, the splitting of isocitrate into succinate and glyoxylate, and the dehydrogenation of malate to oxaloacetate (By similarity). However, the formation of malate from glyoxylate and acetyl-CoA undertaken MLS1, occurs in the peroxisomes when cells are grown on oleic acid (By similarity). The source of acetyl-CoA being either peroxisomal when breaking down fatty acids, or cytosolic when extra-cellular two-carbon substrates are used, therefore, although not strictly essential, the peroxisomal localization of MLS1 appears to be advantageous for cells growing on oleic acid, in that acetyl-CoA production and utilization are thereby intimately compartmentalized together to increase efficiency (By similarity).</text>
</comment>
<comment type="catalytic activity">
    <reaction evidence="2">
        <text>glyoxylate + acetyl-CoA + H2O = (S)-malate + CoA + H(+)</text>
        <dbReference type="Rhea" id="RHEA:18181"/>
        <dbReference type="ChEBI" id="CHEBI:15377"/>
        <dbReference type="ChEBI" id="CHEBI:15378"/>
        <dbReference type="ChEBI" id="CHEBI:15589"/>
        <dbReference type="ChEBI" id="CHEBI:36655"/>
        <dbReference type="ChEBI" id="CHEBI:57287"/>
        <dbReference type="ChEBI" id="CHEBI:57288"/>
        <dbReference type="EC" id="2.3.3.9"/>
    </reaction>
</comment>
<comment type="pathway">
    <text evidence="2">Carbohydrate metabolism; glyoxylate cycle; (S)-malate from isocitrate: step 2/2.</text>
</comment>
<comment type="subunit">
    <text evidence="1">Interacts with PEX9.</text>
</comment>
<comment type="subcellular location">
    <subcellularLocation>
        <location evidence="1">Peroxisome matrix</location>
    </subcellularLocation>
    <text evidence="1">Imported in peroxisome via recognition by the peroxisomal targeting signal receptor PEX9 in an oleate-dependent manner.</text>
</comment>
<comment type="similarity">
    <text evidence="3">Belongs to the malate synthase family.</text>
</comment>
<gene>
    <name evidence="1" type="primary">MLS1</name>
    <name type="ORF">SCY_4677</name>
</gene>